<protein>
    <recommendedName>
        <fullName>Protocatechuate 3,4-dioxygenase beta chain</fullName>
        <ecNumber>1.13.11.3</ecNumber>
    </recommendedName>
    <alternativeName>
        <fullName>3,4-PCD</fullName>
    </alternativeName>
</protein>
<accession>P15110</accession>
<name>PCXB_BURCE</name>
<evidence type="ECO:0000250" key="1"/>
<evidence type="ECO:0000305" key="2"/>
<proteinExistence type="inferred from homology"/>
<gene>
    <name type="primary">pcaH</name>
</gene>
<feature type="chain" id="PRO_0000085099" description="Protocatechuate 3,4-dioxygenase beta chain">
    <location>
        <begin position="1"/>
        <end position="235"/>
    </location>
</feature>
<feature type="binding site" evidence="1">
    <location>
        <position position="107"/>
    </location>
    <ligand>
        <name>Fe cation</name>
        <dbReference type="ChEBI" id="CHEBI:24875"/>
        <note>catalytic</note>
    </ligand>
</feature>
<feature type="binding site" evidence="1">
    <location>
        <position position="146"/>
    </location>
    <ligand>
        <name>Fe cation</name>
        <dbReference type="ChEBI" id="CHEBI:24875"/>
        <note>catalytic</note>
    </ligand>
</feature>
<feature type="binding site" evidence="1">
    <location>
        <position position="159"/>
    </location>
    <ligand>
        <name>Fe cation</name>
        <dbReference type="ChEBI" id="CHEBI:24875"/>
        <note>catalytic</note>
    </ligand>
</feature>
<feature type="binding site" evidence="1">
    <location>
        <position position="161"/>
    </location>
    <ligand>
        <name>Fe cation</name>
        <dbReference type="ChEBI" id="CHEBI:24875"/>
        <note>catalytic</note>
    </ligand>
</feature>
<comment type="function">
    <text>Plays an essential role in the utilization of numerous aromatic and hydroaromatic compounds via the beta-ketoadipate pathway.</text>
</comment>
<comment type="catalytic activity">
    <reaction>
        <text>3,4-dihydroxybenzoate + O2 = 3-carboxy-cis,cis-muconate + 2 H(+)</text>
        <dbReference type="Rhea" id="RHEA:10084"/>
        <dbReference type="ChEBI" id="CHEBI:15378"/>
        <dbReference type="ChEBI" id="CHEBI:15379"/>
        <dbReference type="ChEBI" id="CHEBI:36241"/>
        <dbReference type="ChEBI" id="CHEBI:57496"/>
        <dbReference type="EC" id="1.13.11.3"/>
    </reaction>
</comment>
<comment type="cofactor">
    <cofactor>
        <name>Fe(3+)</name>
        <dbReference type="ChEBI" id="CHEBI:29034"/>
    </cofactor>
    <text>Binds Fe(3+) ion per subunit.</text>
</comment>
<comment type="pathway">
    <text>Aromatic compound metabolism; beta-ketoadipate pathway; 3-carboxy-cis,cis-muconate from 3,4-dihydroxybenzoate: step 1/1.</text>
</comment>
<comment type="subunit">
    <text>The enzyme is an oligomer of 12 copies of the alpha and beta chains.</text>
</comment>
<comment type="similarity">
    <text evidence="2">Belongs to the intradiol ring-cleavage dioxygenase family.</text>
</comment>
<dbReference type="EC" id="1.13.11.3"/>
<dbReference type="EMBL" id="M30791">
    <property type="protein sequence ID" value="AAA25924.1"/>
    <property type="molecule type" value="Genomic_DNA"/>
</dbReference>
<dbReference type="PIR" id="B33487">
    <property type="entry name" value="B33487"/>
</dbReference>
<dbReference type="SMR" id="P15110"/>
<dbReference type="STRING" id="292.WI67_23120"/>
<dbReference type="eggNOG" id="COG3485">
    <property type="taxonomic scope" value="Bacteria"/>
</dbReference>
<dbReference type="UniPathway" id="UPA00157">
    <property type="reaction ID" value="UER00264"/>
</dbReference>
<dbReference type="GO" id="GO:0008199">
    <property type="term" value="F:ferric iron binding"/>
    <property type="evidence" value="ECO:0007669"/>
    <property type="project" value="InterPro"/>
</dbReference>
<dbReference type="GO" id="GO:0018578">
    <property type="term" value="F:protocatechuate 3,4-dioxygenase activity"/>
    <property type="evidence" value="ECO:0007669"/>
    <property type="project" value="UniProtKB-EC"/>
</dbReference>
<dbReference type="GO" id="GO:0019619">
    <property type="term" value="P:3,4-dihydroxybenzoate catabolic process"/>
    <property type="evidence" value="ECO:0007669"/>
    <property type="project" value="InterPro"/>
</dbReference>
<dbReference type="GO" id="GO:0042952">
    <property type="term" value="P:beta-ketoadipate pathway"/>
    <property type="evidence" value="ECO:0007669"/>
    <property type="project" value="UniProtKB-UniPathway"/>
</dbReference>
<dbReference type="CDD" id="cd03464">
    <property type="entry name" value="3_4-PCD_beta"/>
    <property type="match status" value="1"/>
</dbReference>
<dbReference type="Gene3D" id="2.60.130.10">
    <property type="entry name" value="Aromatic compound dioxygenase"/>
    <property type="match status" value="1"/>
</dbReference>
<dbReference type="InterPro" id="IPR000627">
    <property type="entry name" value="Intradiol_dOase_C"/>
</dbReference>
<dbReference type="InterPro" id="IPR015889">
    <property type="entry name" value="Intradiol_dOase_core"/>
</dbReference>
<dbReference type="InterPro" id="IPR050770">
    <property type="entry name" value="Intradiol_RC_Dioxygenase"/>
</dbReference>
<dbReference type="InterPro" id="IPR024756">
    <property type="entry name" value="PCDO_beta_N"/>
</dbReference>
<dbReference type="InterPro" id="IPR012785">
    <property type="entry name" value="Protocat_dOase_b"/>
</dbReference>
<dbReference type="NCBIfam" id="TIGR02422">
    <property type="entry name" value="protocat_beta"/>
    <property type="match status" value="1"/>
</dbReference>
<dbReference type="PANTHER" id="PTHR33711">
    <property type="entry name" value="DIOXYGENASE, PUTATIVE (AFU_ORTHOLOGUE AFUA_2G02910)-RELATED"/>
    <property type="match status" value="1"/>
</dbReference>
<dbReference type="PANTHER" id="PTHR33711:SF10">
    <property type="entry name" value="INTRADIOL RING-CLEAVAGE DIOXYGENASES DOMAIN-CONTAINING PROTEIN"/>
    <property type="match status" value="1"/>
</dbReference>
<dbReference type="Pfam" id="PF00775">
    <property type="entry name" value="Dioxygenase_C"/>
    <property type="match status" value="1"/>
</dbReference>
<dbReference type="Pfam" id="PF12391">
    <property type="entry name" value="PCDO_beta_N"/>
    <property type="match status" value="1"/>
</dbReference>
<dbReference type="SUPFAM" id="SSF49482">
    <property type="entry name" value="Aromatic compound dioxygenase"/>
    <property type="match status" value="1"/>
</dbReference>
<dbReference type="PROSITE" id="PS00083">
    <property type="entry name" value="INTRADIOL_DIOXYGENAS"/>
    <property type="match status" value="1"/>
</dbReference>
<reference key="1">
    <citation type="journal article" date="1989" name="J. Bacteriol.">
        <title>Genetic organization and sequence of the Pseudomonas cepacia genes for the alpha and beta subunits of protocatechuate 3,4-dioxygenase.</title>
        <authorList>
            <person name="Zylstra G.J."/>
            <person name="Olsen R.H."/>
            <person name="Ballou D.P."/>
        </authorList>
    </citation>
    <scope>NUCLEOTIDE SEQUENCE [GENOMIC DNA]</scope>
</reference>
<organism>
    <name type="scientific">Burkholderia cepacia</name>
    <name type="common">Pseudomonas cepacia</name>
    <dbReference type="NCBI Taxonomy" id="292"/>
    <lineage>
        <taxon>Bacteria</taxon>
        <taxon>Pseudomonadati</taxon>
        <taxon>Pseudomonadota</taxon>
        <taxon>Betaproteobacteria</taxon>
        <taxon>Burkholderiales</taxon>
        <taxon>Burkholderiaceae</taxon>
        <taxon>Burkholderia</taxon>
        <taxon>Burkholderia cepacia complex</taxon>
    </lineage>
</organism>
<sequence>MDSPTILTPRDWPSHPAYVHPDYRSSVKRGPTRPMIPLKERLRDQYAPVYGAEDLGPLDHDLTKNAVKNGEPLGERIVVTGRVLDEGGKPVRNTLVEVWQANAAGRYVHKVDQHDAPLDPNFLGAGRCMTDAEGRYRFLTIKPGAYPWGNHPNAWRPNHIHFSLFGDYFGSRLVTQMYFPGDPLLAYDPIFQGTPEAARDRLISRFSLDTTEEGHALGYEFDIVLRGRDATPMER</sequence>
<keyword id="KW-0058">Aromatic hydrocarbons catabolism</keyword>
<keyword id="KW-0223">Dioxygenase</keyword>
<keyword id="KW-0408">Iron</keyword>
<keyword id="KW-0479">Metal-binding</keyword>
<keyword id="KW-0560">Oxidoreductase</keyword>